<organism>
    <name type="scientific">Listeria monocytogenes serotype 4b (strain F2365)</name>
    <dbReference type="NCBI Taxonomy" id="265669"/>
    <lineage>
        <taxon>Bacteria</taxon>
        <taxon>Bacillati</taxon>
        <taxon>Bacillota</taxon>
        <taxon>Bacilli</taxon>
        <taxon>Bacillales</taxon>
        <taxon>Listeriaceae</taxon>
        <taxon>Listeria</taxon>
    </lineage>
</organism>
<gene>
    <name evidence="1" type="primary">pdxS</name>
    <name type="ordered locus">LMOf2365_2133</name>
</gene>
<sequence>MEKKVGTDRVKRGMAQMQKGGVIMDVVNAEQAKIAEEAGAVAVMALERVPSDIRAAGGVARMADPRIVEEVMNAVSIPVMAKARIGHITEARVLEAMGVDYIDESEVLTPADDEFHLLKSDFTVPFVCGCRDIGEALRRIGEGAAMLRTKGEPGTGNIVEAVRHMRQVNGQIRQIAGMTDDELMVAAKNFGAPYELIKEIKTLGKLPVVNFAAGGVATPADAALMMELGADGVFVGSGIFKSDNPAKFASAIVQATTYYTDYELIGKLSKELGSPMKGIEMSRLNPEDRMQDRSI</sequence>
<evidence type="ECO:0000255" key="1">
    <source>
        <dbReference type="HAMAP-Rule" id="MF_01824"/>
    </source>
</evidence>
<keyword id="KW-0456">Lyase</keyword>
<keyword id="KW-0663">Pyridoxal phosphate</keyword>
<keyword id="KW-0704">Schiff base</keyword>
<comment type="function">
    <text evidence="1">Catalyzes the formation of pyridoxal 5'-phosphate from ribose 5-phosphate (RBP), glyceraldehyde 3-phosphate (G3P) and ammonia. The ammonia is provided by the PdxT subunit. Can also use ribulose 5-phosphate and dihydroxyacetone phosphate as substrates, resulting from enzyme-catalyzed isomerization of RBP and G3P, respectively.</text>
</comment>
<comment type="catalytic activity">
    <reaction evidence="1">
        <text>aldehydo-D-ribose 5-phosphate + D-glyceraldehyde 3-phosphate + L-glutamine = pyridoxal 5'-phosphate + L-glutamate + phosphate + 3 H2O + H(+)</text>
        <dbReference type="Rhea" id="RHEA:31507"/>
        <dbReference type="ChEBI" id="CHEBI:15377"/>
        <dbReference type="ChEBI" id="CHEBI:15378"/>
        <dbReference type="ChEBI" id="CHEBI:29985"/>
        <dbReference type="ChEBI" id="CHEBI:43474"/>
        <dbReference type="ChEBI" id="CHEBI:58273"/>
        <dbReference type="ChEBI" id="CHEBI:58359"/>
        <dbReference type="ChEBI" id="CHEBI:59776"/>
        <dbReference type="ChEBI" id="CHEBI:597326"/>
        <dbReference type="EC" id="4.3.3.6"/>
    </reaction>
</comment>
<comment type="pathway">
    <text evidence="1">Cofactor biosynthesis; pyridoxal 5'-phosphate biosynthesis.</text>
</comment>
<comment type="subunit">
    <text evidence="1">In the presence of PdxT, forms a dodecamer of heterodimers.</text>
</comment>
<comment type="similarity">
    <text evidence="1">Belongs to the PdxS/SNZ family.</text>
</comment>
<name>PDXS_LISMF</name>
<dbReference type="EC" id="4.3.3.6" evidence="1"/>
<dbReference type="EMBL" id="AE017262">
    <property type="protein sequence ID" value="AAT04902.1"/>
    <property type="molecule type" value="Genomic_DNA"/>
</dbReference>
<dbReference type="RefSeq" id="WP_003728355.1">
    <property type="nucleotide sequence ID" value="NC_002973.6"/>
</dbReference>
<dbReference type="SMR" id="Q71XR3"/>
<dbReference type="GeneID" id="93240004"/>
<dbReference type="KEGG" id="lmf:LMOf2365_2133"/>
<dbReference type="HOGENOM" id="CLU_055352_1_0_9"/>
<dbReference type="UniPathway" id="UPA00245"/>
<dbReference type="GO" id="GO:0036381">
    <property type="term" value="F:pyridoxal 5'-phosphate synthase (glutamine hydrolysing) activity"/>
    <property type="evidence" value="ECO:0007669"/>
    <property type="project" value="UniProtKB-UniRule"/>
</dbReference>
<dbReference type="GO" id="GO:0006520">
    <property type="term" value="P:amino acid metabolic process"/>
    <property type="evidence" value="ECO:0007669"/>
    <property type="project" value="TreeGrafter"/>
</dbReference>
<dbReference type="GO" id="GO:0042823">
    <property type="term" value="P:pyridoxal phosphate biosynthetic process"/>
    <property type="evidence" value="ECO:0007669"/>
    <property type="project" value="UniProtKB-UniRule"/>
</dbReference>
<dbReference type="GO" id="GO:0008615">
    <property type="term" value="P:pyridoxine biosynthetic process"/>
    <property type="evidence" value="ECO:0007669"/>
    <property type="project" value="TreeGrafter"/>
</dbReference>
<dbReference type="CDD" id="cd04727">
    <property type="entry name" value="pdxS"/>
    <property type="match status" value="1"/>
</dbReference>
<dbReference type="FunFam" id="3.20.20.70:FF:000001">
    <property type="entry name" value="Pyridoxine biosynthesis protein PDX1"/>
    <property type="match status" value="1"/>
</dbReference>
<dbReference type="Gene3D" id="3.20.20.70">
    <property type="entry name" value="Aldolase class I"/>
    <property type="match status" value="1"/>
</dbReference>
<dbReference type="HAMAP" id="MF_01824">
    <property type="entry name" value="PdxS"/>
    <property type="match status" value="1"/>
</dbReference>
<dbReference type="InterPro" id="IPR013785">
    <property type="entry name" value="Aldolase_TIM"/>
</dbReference>
<dbReference type="InterPro" id="IPR001852">
    <property type="entry name" value="PdxS/SNZ"/>
</dbReference>
<dbReference type="InterPro" id="IPR033755">
    <property type="entry name" value="PdxS/SNZ_N"/>
</dbReference>
<dbReference type="InterPro" id="IPR011060">
    <property type="entry name" value="RibuloseP-bd_barrel"/>
</dbReference>
<dbReference type="NCBIfam" id="NF003215">
    <property type="entry name" value="PRK04180.1"/>
    <property type="match status" value="1"/>
</dbReference>
<dbReference type="NCBIfam" id="TIGR00343">
    <property type="entry name" value="pyridoxal 5'-phosphate synthase lyase subunit PdxS"/>
    <property type="match status" value="1"/>
</dbReference>
<dbReference type="PANTHER" id="PTHR31829">
    <property type="entry name" value="PYRIDOXAL 5'-PHOSPHATE SYNTHASE SUBUNIT SNZ1-RELATED"/>
    <property type="match status" value="1"/>
</dbReference>
<dbReference type="PANTHER" id="PTHR31829:SF0">
    <property type="entry name" value="PYRIDOXAL 5'-PHOSPHATE SYNTHASE SUBUNIT SNZ1-RELATED"/>
    <property type="match status" value="1"/>
</dbReference>
<dbReference type="Pfam" id="PF01680">
    <property type="entry name" value="SOR_SNZ"/>
    <property type="match status" value="1"/>
</dbReference>
<dbReference type="PIRSF" id="PIRSF029271">
    <property type="entry name" value="Pdx1"/>
    <property type="match status" value="1"/>
</dbReference>
<dbReference type="SUPFAM" id="SSF51366">
    <property type="entry name" value="Ribulose-phoshate binding barrel"/>
    <property type="match status" value="1"/>
</dbReference>
<dbReference type="PROSITE" id="PS01235">
    <property type="entry name" value="PDXS_SNZ_1"/>
    <property type="match status" value="1"/>
</dbReference>
<dbReference type="PROSITE" id="PS51129">
    <property type="entry name" value="PDXS_SNZ_2"/>
    <property type="match status" value="1"/>
</dbReference>
<feature type="chain" id="PRO_0000109400" description="Pyridoxal 5'-phosphate synthase subunit PdxS">
    <location>
        <begin position="1"/>
        <end position="295"/>
    </location>
</feature>
<feature type="active site" description="Schiff-base intermediate with D-ribose 5-phosphate" evidence="1">
    <location>
        <position position="82"/>
    </location>
</feature>
<feature type="binding site" evidence="1">
    <location>
        <position position="25"/>
    </location>
    <ligand>
        <name>D-ribose 5-phosphate</name>
        <dbReference type="ChEBI" id="CHEBI:78346"/>
    </ligand>
</feature>
<feature type="binding site" evidence="1">
    <location>
        <position position="154"/>
    </location>
    <ligand>
        <name>D-ribose 5-phosphate</name>
        <dbReference type="ChEBI" id="CHEBI:78346"/>
    </ligand>
</feature>
<feature type="binding site" evidence="1">
    <location>
        <position position="166"/>
    </location>
    <ligand>
        <name>D-glyceraldehyde 3-phosphate</name>
        <dbReference type="ChEBI" id="CHEBI:59776"/>
    </ligand>
</feature>
<feature type="binding site" evidence="1">
    <location>
        <position position="215"/>
    </location>
    <ligand>
        <name>D-ribose 5-phosphate</name>
        <dbReference type="ChEBI" id="CHEBI:78346"/>
    </ligand>
</feature>
<feature type="binding site" evidence="1">
    <location>
        <begin position="236"/>
        <end position="237"/>
    </location>
    <ligand>
        <name>D-ribose 5-phosphate</name>
        <dbReference type="ChEBI" id="CHEBI:78346"/>
    </ligand>
</feature>
<accession>Q71XR3</accession>
<protein>
    <recommendedName>
        <fullName evidence="1">Pyridoxal 5'-phosphate synthase subunit PdxS</fullName>
        <shortName evidence="1">PLP synthase subunit PdxS</shortName>
        <ecNumber evidence="1">4.3.3.6</ecNumber>
    </recommendedName>
    <alternativeName>
        <fullName evidence="1">Pdx1</fullName>
    </alternativeName>
</protein>
<proteinExistence type="inferred from homology"/>
<reference key="1">
    <citation type="journal article" date="2004" name="Nucleic Acids Res.">
        <title>Whole genome comparisons of serotype 4b and 1/2a strains of the food-borne pathogen Listeria monocytogenes reveal new insights into the core genome components of this species.</title>
        <authorList>
            <person name="Nelson K.E."/>
            <person name="Fouts D.E."/>
            <person name="Mongodin E.F."/>
            <person name="Ravel J."/>
            <person name="DeBoy R.T."/>
            <person name="Kolonay J.F."/>
            <person name="Rasko D.A."/>
            <person name="Angiuoli S.V."/>
            <person name="Gill S.R."/>
            <person name="Paulsen I.T."/>
            <person name="Peterson J.D."/>
            <person name="White O."/>
            <person name="Nelson W.C."/>
            <person name="Nierman W.C."/>
            <person name="Beanan M.J."/>
            <person name="Brinkac L.M."/>
            <person name="Daugherty S.C."/>
            <person name="Dodson R.J."/>
            <person name="Durkin A.S."/>
            <person name="Madupu R."/>
            <person name="Haft D.H."/>
            <person name="Selengut J."/>
            <person name="Van Aken S.E."/>
            <person name="Khouri H.M."/>
            <person name="Fedorova N."/>
            <person name="Forberger H.A."/>
            <person name="Tran B."/>
            <person name="Kathariou S."/>
            <person name="Wonderling L.D."/>
            <person name="Uhlich G.A."/>
            <person name="Bayles D.O."/>
            <person name="Luchansky J.B."/>
            <person name="Fraser C.M."/>
        </authorList>
    </citation>
    <scope>NUCLEOTIDE SEQUENCE [LARGE SCALE GENOMIC DNA]</scope>
    <source>
        <strain>F2365</strain>
    </source>
</reference>